<protein>
    <recommendedName>
        <fullName evidence="1">Elongation factor 4</fullName>
        <shortName evidence="1">EF-4</shortName>
        <ecNumber evidence="1">3.6.5.n1</ecNumber>
    </recommendedName>
    <alternativeName>
        <fullName evidence="1">Ribosomal back-translocase LepA</fullName>
    </alternativeName>
</protein>
<comment type="function">
    <text evidence="1">Required for accurate and efficient protein synthesis under certain stress conditions. May act as a fidelity factor of the translation reaction, by catalyzing a one-codon backward translocation of tRNAs on improperly translocated ribosomes. Back-translocation proceeds from a post-translocation (POST) complex to a pre-translocation (PRE) complex, thus giving elongation factor G a second chance to translocate the tRNAs correctly. Binds to ribosomes in a GTP-dependent manner.</text>
</comment>
<comment type="catalytic activity">
    <reaction evidence="1">
        <text>GTP + H2O = GDP + phosphate + H(+)</text>
        <dbReference type="Rhea" id="RHEA:19669"/>
        <dbReference type="ChEBI" id="CHEBI:15377"/>
        <dbReference type="ChEBI" id="CHEBI:15378"/>
        <dbReference type="ChEBI" id="CHEBI:37565"/>
        <dbReference type="ChEBI" id="CHEBI:43474"/>
        <dbReference type="ChEBI" id="CHEBI:58189"/>
        <dbReference type="EC" id="3.6.5.n1"/>
    </reaction>
</comment>
<comment type="subcellular location">
    <subcellularLocation>
        <location evidence="1">Cell inner membrane</location>
        <topology evidence="1">Peripheral membrane protein</topology>
        <orientation evidence="1">Cytoplasmic side</orientation>
    </subcellularLocation>
</comment>
<comment type="similarity">
    <text evidence="1">Belongs to the TRAFAC class translation factor GTPase superfamily. Classic translation factor GTPase family. LepA subfamily.</text>
</comment>
<feature type="chain" id="PRO_0000224789" description="Elongation factor 4">
    <location>
        <begin position="1"/>
        <end position="597"/>
    </location>
</feature>
<feature type="domain" description="tr-type G">
    <location>
        <begin position="2"/>
        <end position="184"/>
    </location>
</feature>
<feature type="binding site" evidence="1">
    <location>
        <begin position="14"/>
        <end position="19"/>
    </location>
    <ligand>
        <name>GTP</name>
        <dbReference type="ChEBI" id="CHEBI:37565"/>
    </ligand>
</feature>
<feature type="binding site" evidence="1">
    <location>
        <begin position="131"/>
        <end position="134"/>
    </location>
    <ligand>
        <name>GTP</name>
        <dbReference type="ChEBI" id="CHEBI:37565"/>
    </ligand>
</feature>
<organism>
    <name type="scientific">Cupriavidus pinatubonensis (strain JMP 134 / LMG 1197)</name>
    <name type="common">Cupriavidus necator (strain JMP 134)</name>
    <dbReference type="NCBI Taxonomy" id="264198"/>
    <lineage>
        <taxon>Bacteria</taxon>
        <taxon>Pseudomonadati</taxon>
        <taxon>Pseudomonadota</taxon>
        <taxon>Betaproteobacteria</taxon>
        <taxon>Burkholderiales</taxon>
        <taxon>Burkholderiaceae</taxon>
        <taxon>Cupriavidus</taxon>
    </lineage>
</organism>
<evidence type="ECO:0000255" key="1">
    <source>
        <dbReference type="HAMAP-Rule" id="MF_00071"/>
    </source>
</evidence>
<accession>Q46Z15</accession>
<name>LEPA_CUPPJ</name>
<proteinExistence type="inferred from homology"/>
<gene>
    <name evidence="1" type="primary">lepA</name>
    <name type="ordered locus">Reut_A2255</name>
</gene>
<sequence>MDHIRNFSIIAHIDHGKSTLADRIIQLCGGLSDREMEAQVLDSMDIEKERGITIKAQTAALTYKARDGKVYNLNLIDTPGHVDFSYEVSRSLSACEGALLVVDASQGVEAQTVANCYTAIELGVEVVPVLNKIDLPQADPANAIQEIEDVIGIDAHDATPCSAKTGQGVEDVIEALIAKVPPPKGDASAPLQALIIDSWFDNYVGVVMLVRVVNGTLRPKDKALLMATGAQHLVEQVGVFSPKSVQRDSLTAGQVGFVIAGIKELKAAKVGDTITTLPRKAEAPLPGFKEVKPQVFAGLYPVEANQYEALRESLEKLRLNDASLMFEPEVSQALGFGFRCGFLGLLHMEIVQERLEREFDMDLITTAPTVVYQVQMRDGTMVTVENPAKMPDPSRIEAILEPIVTVNLYMPQEYVGSVITLCTQKRGSQINMSYHGKQVQLTYEIPMAEIVMDFFDRLKSVSRGYASMDYEFKEYRPSDVVKVDILINSDKVDALSVIVHRSNSQYRGREVAAKMREIIPRQMYDVAIQAAIGSNIIARENVKALRKNVLAKCYGGDISRKKKLLEKQKAGKKRMKQVGTVEIPQEAFLAILQVDDK</sequence>
<keyword id="KW-0997">Cell inner membrane</keyword>
<keyword id="KW-1003">Cell membrane</keyword>
<keyword id="KW-0342">GTP-binding</keyword>
<keyword id="KW-0378">Hydrolase</keyword>
<keyword id="KW-0472">Membrane</keyword>
<keyword id="KW-0547">Nucleotide-binding</keyword>
<keyword id="KW-0648">Protein biosynthesis</keyword>
<dbReference type="EC" id="3.6.5.n1" evidence="1"/>
<dbReference type="EMBL" id="CP000090">
    <property type="protein sequence ID" value="AAZ61618.1"/>
    <property type="molecule type" value="Genomic_DNA"/>
</dbReference>
<dbReference type="SMR" id="Q46Z15"/>
<dbReference type="STRING" id="264198.Reut_A2255"/>
<dbReference type="KEGG" id="reu:Reut_A2255"/>
<dbReference type="eggNOG" id="COG0481">
    <property type="taxonomic scope" value="Bacteria"/>
</dbReference>
<dbReference type="HOGENOM" id="CLU_009995_3_3_4"/>
<dbReference type="OrthoDB" id="9801472at2"/>
<dbReference type="GO" id="GO:0005886">
    <property type="term" value="C:plasma membrane"/>
    <property type="evidence" value="ECO:0007669"/>
    <property type="project" value="UniProtKB-SubCell"/>
</dbReference>
<dbReference type="GO" id="GO:0005525">
    <property type="term" value="F:GTP binding"/>
    <property type="evidence" value="ECO:0007669"/>
    <property type="project" value="UniProtKB-UniRule"/>
</dbReference>
<dbReference type="GO" id="GO:0003924">
    <property type="term" value="F:GTPase activity"/>
    <property type="evidence" value="ECO:0007669"/>
    <property type="project" value="UniProtKB-UniRule"/>
</dbReference>
<dbReference type="GO" id="GO:0097216">
    <property type="term" value="F:guanosine tetraphosphate binding"/>
    <property type="evidence" value="ECO:0007669"/>
    <property type="project" value="UniProtKB-ARBA"/>
</dbReference>
<dbReference type="GO" id="GO:0043022">
    <property type="term" value="F:ribosome binding"/>
    <property type="evidence" value="ECO:0007669"/>
    <property type="project" value="UniProtKB-UniRule"/>
</dbReference>
<dbReference type="GO" id="GO:0003746">
    <property type="term" value="F:translation elongation factor activity"/>
    <property type="evidence" value="ECO:0007669"/>
    <property type="project" value="UniProtKB-UniRule"/>
</dbReference>
<dbReference type="GO" id="GO:0045727">
    <property type="term" value="P:positive regulation of translation"/>
    <property type="evidence" value="ECO:0007669"/>
    <property type="project" value="UniProtKB-UniRule"/>
</dbReference>
<dbReference type="CDD" id="cd16260">
    <property type="entry name" value="EF4_III"/>
    <property type="match status" value="1"/>
</dbReference>
<dbReference type="CDD" id="cd01890">
    <property type="entry name" value="LepA"/>
    <property type="match status" value="1"/>
</dbReference>
<dbReference type="CDD" id="cd03709">
    <property type="entry name" value="lepA_C"/>
    <property type="match status" value="1"/>
</dbReference>
<dbReference type="FunFam" id="3.40.50.300:FF:000078">
    <property type="entry name" value="Elongation factor 4"/>
    <property type="match status" value="1"/>
</dbReference>
<dbReference type="FunFam" id="2.40.30.10:FF:000015">
    <property type="entry name" value="Translation factor GUF1, mitochondrial"/>
    <property type="match status" value="1"/>
</dbReference>
<dbReference type="FunFam" id="3.30.70.240:FF:000007">
    <property type="entry name" value="Translation factor GUF1, mitochondrial"/>
    <property type="match status" value="1"/>
</dbReference>
<dbReference type="FunFam" id="3.30.70.2570:FF:000001">
    <property type="entry name" value="Translation factor GUF1, mitochondrial"/>
    <property type="match status" value="1"/>
</dbReference>
<dbReference type="FunFam" id="3.30.70.870:FF:000004">
    <property type="entry name" value="Translation factor GUF1, mitochondrial"/>
    <property type="match status" value="1"/>
</dbReference>
<dbReference type="Gene3D" id="3.30.70.240">
    <property type="match status" value="1"/>
</dbReference>
<dbReference type="Gene3D" id="3.30.70.2570">
    <property type="entry name" value="Elongation factor 4, C-terminal domain"/>
    <property type="match status" value="1"/>
</dbReference>
<dbReference type="Gene3D" id="3.30.70.870">
    <property type="entry name" value="Elongation Factor G (Translational Gtpase), domain 3"/>
    <property type="match status" value="1"/>
</dbReference>
<dbReference type="Gene3D" id="3.40.50.300">
    <property type="entry name" value="P-loop containing nucleotide triphosphate hydrolases"/>
    <property type="match status" value="1"/>
</dbReference>
<dbReference type="Gene3D" id="2.40.30.10">
    <property type="entry name" value="Translation factors"/>
    <property type="match status" value="1"/>
</dbReference>
<dbReference type="HAMAP" id="MF_00071">
    <property type="entry name" value="LepA"/>
    <property type="match status" value="1"/>
</dbReference>
<dbReference type="InterPro" id="IPR006297">
    <property type="entry name" value="EF-4"/>
</dbReference>
<dbReference type="InterPro" id="IPR035647">
    <property type="entry name" value="EFG_III/V"/>
</dbReference>
<dbReference type="InterPro" id="IPR000640">
    <property type="entry name" value="EFG_V-like"/>
</dbReference>
<dbReference type="InterPro" id="IPR004161">
    <property type="entry name" value="EFTu-like_2"/>
</dbReference>
<dbReference type="InterPro" id="IPR031157">
    <property type="entry name" value="G_TR_CS"/>
</dbReference>
<dbReference type="InterPro" id="IPR038363">
    <property type="entry name" value="LepA_C_sf"/>
</dbReference>
<dbReference type="InterPro" id="IPR013842">
    <property type="entry name" value="LepA_CTD"/>
</dbReference>
<dbReference type="InterPro" id="IPR035654">
    <property type="entry name" value="LepA_IV"/>
</dbReference>
<dbReference type="InterPro" id="IPR027417">
    <property type="entry name" value="P-loop_NTPase"/>
</dbReference>
<dbReference type="InterPro" id="IPR005225">
    <property type="entry name" value="Small_GTP-bd"/>
</dbReference>
<dbReference type="InterPro" id="IPR000795">
    <property type="entry name" value="T_Tr_GTP-bd_dom"/>
</dbReference>
<dbReference type="InterPro" id="IPR009000">
    <property type="entry name" value="Transl_B-barrel_sf"/>
</dbReference>
<dbReference type="NCBIfam" id="TIGR01393">
    <property type="entry name" value="lepA"/>
    <property type="match status" value="1"/>
</dbReference>
<dbReference type="NCBIfam" id="TIGR00231">
    <property type="entry name" value="small_GTP"/>
    <property type="match status" value="1"/>
</dbReference>
<dbReference type="PANTHER" id="PTHR43512:SF4">
    <property type="entry name" value="TRANSLATION FACTOR GUF1 HOMOLOG, CHLOROPLASTIC"/>
    <property type="match status" value="1"/>
</dbReference>
<dbReference type="PANTHER" id="PTHR43512">
    <property type="entry name" value="TRANSLATION FACTOR GUF1-RELATED"/>
    <property type="match status" value="1"/>
</dbReference>
<dbReference type="Pfam" id="PF00679">
    <property type="entry name" value="EFG_C"/>
    <property type="match status" value="1"/>
</dbReference>
<dbReference type="Pfam" id="PF00009">
    <property type="entry name" value="GTP_EFTU"/>
    <property type="match status" value="1"/>
</dbReference>
<dbReference type="Pfam" id="PF03144">
    <property type="entry name" value="GTP_EFTU_D2"/>
    <property type="match status" value="1"/>
</dbReference>
<dbReference type="Pfam" id="PF06421">
    <property type="entry name" value="LepA_C"/>
    <property type="match status" value="1"/>
</dbReference>
<dbReference type="PRINTS" id="PR00315">
    <property type="entry name" value="ELONGATNFCT"/>
</dbReference>
<dbReference type="SMART" id="SM00838">
    <property type="entry name" value="EFG_C"/>
    <property type="match status" value="1"/>
</dbReference>
<dbReference type="SUPFAM" id="SSF54980">
    <property type="entry name" value="EF-G C-terminal domain-like"/>
    <property type="match status" value="2"/>
</dbReference>
<dbReference type="SUPFAM" id="SSF52540">
    <property type="entry name" value="P-loop containing nucleoside triphosphate hydrolases"/>
    <property type="match status" value="1"/>
</dbReference>
<dbReference type="SUPFAM" id="SSF50447">
    <property type="entry name" value="Translation proteins"/>
    <property type="match status" value="1"/>
</dbReference>
<dbReference type="PROSITE" id="PS00301">
    <property type="entry name" value="G_TR_1"/>
    <property type="match status" value="1"/>
</dbReference>
<dbReference type="PROSITE" id="PS51722">
    <property type="entry name" value="G_TR_2"/>
    <property type="match status" value="1"/>
</dbReference>
<reference key="1">
    <citation type="journal article" date="2010" name="PLoS ONE">
        <title>The complete multipartite genome sequence of Cupriavidus necator JMP134, a versatile pollutant degrader.</title>
        <authorList>
            <person name="Lykidis A."/>
            <person name="Perez-Pantoja D."/>
            <person name="Ledger T."/>
            <person name="Mavromatis K."/>
            <person name="Anderson I.J."/>
            <person name="Ivanova N.N."/>
            <person name="Hooper S.D."/>
            <person name="Lapidus A."/>
            <person name="Lucas S."/>
            <person name="Gonzalez B."/>
            <person name="Kyrpides N.C."/>
        </authorList>
    </citation>
    <scope>NUCLEOTIDE SEQUENCE [LARGE SCALE GENOMIC DNA]</scope>
    <source>
        <strain>JMP134 / LMG 1197</strain>
    </source>
</reference>